<dbReference type="EMBL" id="AY596297">
    <property type="protein sequence ID" value="AAV45355.1"/>
    <property type="molecule type" value="Genomic_DNA"/>
</dbReference>
<dbReference type="RefSeq" id="WP_011222948.1">
    <property type="nucleotide sequence ID" value="NC_006396.1"/>
</dbReference>
<dbReference type="SMR" id="Q5V547"/>
<dbReference type="STRING" id="272569.rrnAC0300"/>
<dbReference type="PaxDb" id="272569-rrnAC0300"/>
<dbReference type="EnsemblBacteria" id="AAV45355">
    <property type="protein sequence ID" value="AAV45355"/>
    <property type="gene ID" value="rrnAC0300"/>
</dbReference>
<dbReference type="GeneID" id="40154593"/>
<dbReference type="KEGG" id="hma:rrnAC0300"/>
<dbReference type="PATRIC" id="fig|272569.17.peg.1093"/>
<dbReference type="eggNOG" id="arCOG00497">
    <property type="taxonomic scope" value="Archaea"/>
</dbReference>
<dbReference type="HOGENOM" id="CLU_070010_4_0_2"/>
<dbReference type="Proteomes" id="UP000001169">
    <property type="component" value="Chromosome I"/>
</dbReference>
<dbReference type="GO" id="GO:0016787">
    <property type="term" value="F:hydrolase activity"/>
    <property type="evidence" value="ECO:0007669"/>
    <property type="project" value="UniProtKB-UniRule"/>
</dbReference>
<dbReference type="Gene3D" id="3.60.15.10">
    <property type="entry name" value="Ribonuclease Z/Hydroxyacylglutathione hydrolase-like"/>
    <property type="match status" value="1"/>
</dbReference>
<dbReference type="HAMAP" id="MF_00457">
    <property type="entry name" value="UPF0173"/>
    <property type="match status" value="1"/>
</dbReference>
<dbReference type="InterPro" id="IPR036866">
    <property type="entry name" value="RibonucZ/Hydroxyglut_hydro"/>
</dbReference>
<dbReference type="InterPro" id="IPR022877">
    <property type="entry name" value="UPF0173"/>
</dbReference>
<dbReference type="InterPro" id="IPR050114">
    <property type="entry name" value="UPF0173_UPF0282_UlaG_hydrolase"/>
</dbReference>
<dbReference type="NCBIfam" id="NF001911">
    <property type="entry name" value="PRK00685.1"/>
    <property type="match status" value="1"/>
</dbReference>
<dbReference type="PANTHER" id="PTHR43546:SF3">
    <property type="entry name" value="UPF0173 METAL-DEPENDENT HYDROLASE MJ1163"/>
    <property type="match status" value="1"/>
</dbReference>
<dbReference type="PANTHER" id="PTHR43546">
    <property type="entry name" value="UPF0173 METAL-DEPENDENT HYDROLASE MJ1163-RELATED"/>
    <property type="match status" value="1"/>
</dbReference>
<dbReference type="Pfam" id="PF13483">
    <property type="entry name" value="Lactamase_B_3"/>
    <property type="match status" value="1"/>
</dbReference>
<dbReference type="SUPFAM" id="SSF56281">
    <property type="entry name" value="Metallo-hydrolase/oxidoreductase"/>
    <property type="match status" value="1"/>
</dbReference>
<reference key="1">
    <citation type="journal article" date="2004" name="Genome Res.">
        <title>Genome sequence of Haloarcula marismortui: a halophilic archaeon from the Dead Sea.</title>
        <authorList>
            <person name="Baliga N.S."/>
            <person name="Bonneau R."/>
            <person name="Facciotti M.T."/>
            <person name="Pan M."/>
            <person name="Glusman G."/>
            <person name="Deutsch E.W."/>
            <person name="Shannon P."/>
            <person name="Chiu Y."/>
            <person name="Weng R.S."/>
            <person name="Gan R.R."/>
            <person name="Hung P."/>
            <person name="Date S.V."/>
            <person name="Marcotte E."/>
            <person name="Hood L."/>
            <person name="Ng W.V."/>
        </authorList>
    </citation>
    <scope>NUCLEOTIDE SEQUENCE [LARGE SCALE GENOMIC DNA]</scope>
    <source>
        <strain>ATCC 43049 / DSM 3752 / JCM 8966 / VKM B-1809</strain>
    </source>
</reference>
<keyword id="KW-0378">Hydrolase</keyword>
<keyword id="KW-1185">Reference proteome</keyword>
<organism>
    <name type="scientific">Haloarcula marismortui (strain ATCC 43049 / DSM 3752 / JCM 8966 / VKM B-1809)</name>
    <name type="common">Halobacterium marismortui</name>
    <dbReference type="NCBI Taxonomy" id="272569"/>
    <lineage>
        <taxon>Archaea</taxon>
        <taxon>Methanobacteriati</taxon>
        <taxon>Methanobacteriota</taxon>
        <taxon>Stenosarchaea group</taxon>
        <taxon>Halobacteria</taxon>
        <taxon>Halobacteriales</taxon>
        <taxon>Haloarculaceae</taxon>
        <taxon>Haloarcula</taxon>
    </lineage>
</organism>
<proteinExistence type="inferred from homology"/>
<name>Y300_HALMA</name>
<accession>Q5V547</accession>
<gene>
    <name type="ordered locus">rrnAC0300</name>
</gene>
<protein>
    <recommendedName>
        <fullName evidence="1">UPF0173 metal-dependent hydrolase rrnAC0300</fullName>
    </recommendedName>
</protein>
<sequence length="239" mass="25963">MELTWYGHSTWHVTVDDTELLIDPFFDNPHTDTDPEELGPDYVLLTHGHADHIGDVDRYEGCGLVATPEVVEYCKDNFGEFNAVGGMGMNLGGTVEIGDAFVTMHRADHTNGMETSYGASGGMPGGFIISDTKPTQVSDAESTTFYHAGDTGLMTEMRDVIGPFLEPDAAAVPVGDHFTMGPMQAAVAVDWLDVDHAFPMHYDTFPPIEIETQDFVNEVKGTGSDADVHVLDGDETFEL</sequence>
<evidence type="ECO:0000255" key="1">
    <source>
        <dbReference type="HAMAP-Rule" id="MF_00457"/>
    </source>
</evidence>
<comment type="similarity">
    <text evidence="1">Belongs to the UPF0173 family.</text>
</comment>
<feature type="chain" id="PRO_0000367224" description="UPF0173 metal-dependent hydrolase rrnAC0300">
    <location>
        <begin position="1"/>
        <end position="239"/>
    </location>
</feature>